<sequence>MVASLSGAQIRQTFLDFYAAKGHKILPSASLVPEDPTVLLTIAGMLPFKPIFLGQREAEVPRATTSQKCIRTNDIENVGQTARHHTYFEMLGNFSFGDYFKEQAIAWAWELSTEVYKLPPERIVPSVFEEDDEAFAIWRDKIGIPEHRIQRMGAEDNFWASGPTGPCGPCSELYYDFYPEKGDDKIDLEDDTRFIEYYNLVFMEYNRDSDGKLAPLKNKNIDTGLGLERMAQILQGVPNNYETDLIFPIIETAAKIAGIKYKKSKAKTKTSLKVVGDHVRSVVQMIADGITASNVGRGYVLRRLIRRVVRHGQLIGIDGAFITQVAETAIASLEVAYPEVREREKIIKTELEREEAQFLKTLNRGEKLLGEIMAKKPKQISGKDAFDLYDTYGFPLELTQEIAAEQGLTVDEDGFAKAMKEQQDRGRSAHKTIDLTVQSALEQLAATVHPTDFLGYTDFSAKAKVAALLVKGETVDQASAGSEVQIALDQTPFYAESGGQIGDRGYLNGKDVVVRIEDVQKESDIFIHYGRIERGTLEVGDKLTAQIDLACRRQVQAHHTATHLLQAALKNIVDESIGQAGSLVAFDRLRFDFNYNQAVTPEQIQEIETQINTWIAEAHTTETEVMPIAEAKAKGAVAMFGEKYGAEVRVMDVPGVSMELCGGTHVKNTSEIGLFKIVTEAGVASGVRRIEAIAGPAVLEYLNVRDAVVRDLSDRFKAKPEELPERITTLQADLKTAQKQLDTLKAQLALVKSEQLLDQAEPAGEVKVLVSQLEGVDSESLKTAAGRLLQKLGEGAVVLGSVPAEGKVSLVAAFSPKVIEQGLQAGKFVGAIAKQCGGGGGGRPNLAQAGGRDPSKLADALDDAQKQLLAQLK</sequence>
<gene>
    <name evidence="1" type="primary">alaS</name>
    <name type="ordered locus">AM1_4444</name>
</gene>
<name>SYA_ACAM1</name>
<accession>B0CFX4</accession>
<dbReference type="EC" id="6.1.1.7" evidence="1"/>
<dbReference type="EMBL" id="CP000828">
    <property type="protein sequence ID" value="ABW29421.1"/>
    <property type="molecule type" value="Genomic_DNA"/>
</dbReference>
<dbReference type="RefSeq" id="WP_012164739.1">
    <property type="nucleotide sequence ID" value="NC_009925.1"/>
</dbReference>
<dbReference type="SMR" id="B0CFX4"/>
<dbReference type="STRING" id="329726.AM1_4444"/>
<dbReference type="KEGG" id="amr:AM1_4444"/>
<dbReference type="eggNOG" id="COG0013">
    <property type="taxonomic scope" value="Bacteria"/>
</dbReference>
<dbReference type="HOGENOM" id="CLU_004485_1_1_3"/>
<dbReference type="OrthoDB" id="9803884at2"/>
<dbReference type="Proteomes" id="UP000000268">
    <property type="component" value="Chromosome"/>
</dbReference>
<dbReference type="GO" id="GO:0005829">
    <property type="term" value="C:cytosol"/>
    <property type="evidence" value="ECO:0007669"/>
    <property type="project" value="TreeGrafter"/>
</dbReference>
<dbReference type="GO" id="GO:0004813">
    <property type="term" value="F:alanine-tRNA ligase activity"/>
    <property type="evidence" value="ECO:0007669"/>
    <property type="project" value="UniProtKB-UniRule"/>
</dbReference>
<dbReference type="GO" id="GO:0002161">
    <property type="term" value="F:aminoacyl-tRNA deacylase activity"/>
    <property type="evidence" value="ECO:0007669"/>
    <property type="project" value="TreeGrafter"/>
</dbReference>
<dbReference type="GO" id="GO:0005524">
    <property type="term" value="F:ATP binding"/>
    <property type="evidence" value="ECO:0007669"/>
    <property type="project" value="UniProtKB-UniRule"/>
</dbReference>
<dbReference type="GO" id="GO:0000049">
    <property type="term" value="F:tRNA binding"/>
    <property type="evidence" value="ECO:0007669"/>
    <property type="project" value="UniProtKB-KW"/>
</dbReference>
<dbReference type="GO" id="GO:0008270">
    <property type="term" value="F:zinc ion binding"/>
    <property type="evidence" value="ECO:0007669"/>
    <property type="project" value="UniProtKB-UniRule"/>
</dbReference>
<dbReference type="GO" id="GO:0006419">
    <property type="term" value="P:alanyl-tRNA aminoacylation"/>
    <property type="evidence" value="ECO:0007669"/>
    <property type="project" value="UniProtKB-UniRule"/>
</dbReference>
<dbReference type="CDD" id="cd00673">
    <property type="entry name" value="AlaRS_core"/>
    <property type="match status" value="1"/>
</dbReference>
<dbReference type="FunFam" id="3.10.310.40:FF:000001">
    <property type="entry name" value="Alanine--tRNA ligase"/>
    <property type="match status" value="1"/>
</dbReference>
<dbReference type="FunFam" id="3.30.54.20:FF:000001">
    <property type="entry name" value="Alanine--tRNA ligase"/>
    <property type="match status" value="1"/>
</dbReference>
<dbReference type="FunFam" id="3.30.930.10:FF:000004">
    <property type="entry name" value="Alanine--tRNA ligase"/>
    <property type="match status" value="1"/>
</dbReference>
<dbReference type="FunFam" id="3.30.980.10:FF:000004">
    <property type="entry name" value="Alanine--tRNA ligase, cytoplasmic"/>
    <property type="match status" value="1"/>
</dbReference>
<dbReference type="FunFam" id="2.40.30.130:FF:000007">
    <property type="entry name" value="Probable alanine--tRNA ligase, chloroplastic"/>
    <property type="match status" value="1"/>
</dbReference>
<dbReference type="Gene3D" id="2.40.30.130">
    <property type="match status" value="1"/>
</dbReference>
<dbReference type="Gene3D" id="3.10.310.40">
    <property type="match status" value="1"/>
</dbReference>
<dbReference type="Gene3D" id="3.30.54.20">
    <property type="match status" value="1"/>
</dbReference>
<dbReference type="Gene3D" id="6.10.250.550">
    <property type="match status" value="1"/>
</dbReference>
<dbReference type="Gene3D" id="3.30.930.10">
    <property type="entry name" value="Bira Bifunctional Protein, Domain 2"/>
    <property type="match status" value="1"/>
</dbReference>
<dbReference type="Gene3D" id="3.30.980.10">
    <property type="entry name" value="Threonyl-trna Synthetase, Chain A, domain 2"/>
    <property type="match status" value="1"/>
</dbReference>
<dbReference type="HAMAP" id="MF_00036_B">
    <property type="entry name" value="Ala_tRNA_synth_B"/>
    <property type="match status" value="1"/>
</dbReference>
<dbReference type="InterPro" id="IPR045864">
    <property type="entry name" value="aa-tRNA-synth_II/BPL/LPL"/>
</dbReference>
<dbReference type="InterPro" id="IPR002318">
    <property type="entry name" value="Ala-tRNA-lgiase_IIc"/>
</dbReference>
<dbReference type="InterPro" id="IPR018162">
    <property type="entry name" value="Ala-tRNA-ligase_IIc_anticod-bd"/>
</dbReference>
<dbReference type="InterPro" id="IPR018165">
    <property type="entry name" value="Ala-tRNA-synth_IIc_core"/>
</dbReference>
<dbReference type="InterPro" id="IPR018164">
    <property type="entry name" value="Ala-tRNA-synth_IIc_N"/>
</dbReference>
<dbReference type="InterPro" id="IPR050058">
    <property type="entry name" value="Ala-tRNA_ligase"/>
</dbReference>
<dbReference type="InterPro" id="IPR023033">
    <property type="entry name" value="Ala_tRNA_ligase_euk/bac"/>
</dbReference>
<dbReference type="InterPro" id="IPR003156">
    <property type="entry name" value="DHHA1_dom"/>
</dbReference>
<dbReference type="InterPro" id="IPR018163">
    <property type="entry name" value="Thr/Ala-tRNA-synth_IIc_edit"/>
</dbReference>
<dbReference type="InterPro" id="IPR009000">
    <property type="entry name" value="Transl_B-barrel_sf"/>
</dbReference>
<dbReference type="InterPro" id="IPR012947">
    <property type="entry name" value="tRNA_SAD"/>
</dbReference>
<dbReference type="NCBIfam" id="TIGR00344">
    <property type="entry name" value="alaS"/>
    <property type="match status" value="1"/>
</dbReference>
<dbReference type="PANTHER" id="PTHR11777:SF9">
    <property type="entry name" value="ALANINE--TRNA LIGASE, CYTOPLASMIC"/>
    <property type="match status" value="1"/>
</dbReference>
<dbReference type="PANTHER" id="PTHR11777">
    <property type="entry name" value="ALANYL-TRNA SYNTHETASE"/>
    <property type="match status" value="1"/>
</dbReference>
<dbReference type="Pfam" id="PF02272">
    <property type="entry name" value="DHHA1"/>
    <property type="match status" value="1"/>
</dbReference>
<dbReference type="Pfam" id="PF01411">
    <property type="entry name" value="tRNA-synt_2c"/>
    <property type="match status" value="1"/>
</dbReference>
<dbReference type="Pfam" id="PF07973">
    <property type="entry name" value="tRNA_SAD"/>
    <property type="match status" value="1"/>
</dbReference>
<dbReference type="PRINTS" id="PR00980">
    <property type="entry name" value="TRNASYNTHALA"/>
</dbReference>
<dbReference type="SMART" id="SM00863">
    <property type="entry name" value="tRNA_SAD"/>
    <property type="match status" value="1"/>
</dbReference>
<dbReference type="SUPFAM" id="SSF55681">
    <property type="entry name" value="Class II aaRS and biotin synthetases"/>
    <property type="match status" value="1"/>
</dbReference>
<dbReference type="SUPFAM" id="SSF101353">
    <property type="entry name" value="Putative anticodon-binding domain of alanyl-tRNA synthetase (AlaRS)"/>
    <property type="match status" value="1"/>
</dbReference>
<dbReference type="SUPFAM" id="SSF55186">
    <property type="entry name" value="ThrRS/AlaRS common domain"/>
    <property type="match status" value="1"/>
</dbReference>
<dbReference type="SUPFAM" id="SSF50447">
    <property type="entry name" value="Translation proteins"/>
    <property type="match status" value="1"/>
</dbReference>
<dbReference type="PROSITE" id="PS50860">
    <property type="entry name" value="AA_TRNA_LIGASE_II_ALA"/>
    <property type="match status" value="1"/>
</dbReference>
<protein>
    <recommendedName>
        <fullName evidence="1">Alanine--tRNA ligase</fullName>
        <ecNumber evidence="1">6.1.1.7</ecNumber>
    </recommendedName>
    <alternativeName>
        <fullName evidence="1">Alanyl-tRNA synthetase</fullName>
        <shortName evidence="1">AlaRS</shortName>
    </alternativeName>
</protein>
<reference key="1">
    <citation type="journal article" date="2008" name="Proc. Natl. Acad. Sci. U.S.A.">
        <title>Niche adaptation and genome expansion in the chlorophyll d-producing cyanobacterium Acaryochloris marina.</title>
        <authorList>
            <person name="Swingley W.D."/>
            <person name="Chen M."/>
            <person name="Cheung P.C."/>
            <person name="Conrad A.L."/>
            <person name="Dejesa L.C."/>
            <person name="Hao J."/>
            <person name="Honchak B.M."/>
            <person name="Karbach L.E."/>
            <person name="Kurdoglu A."/>
            <person name="Lahiri S."/>
            <person name="Mastrian S.D."/>
            <person name="Miyashita H."/>
            <person name="Page L."/>
            <person name="Ramakrishna P."/>
            <person name="Satoh S."/>
            <person name="Sattley W.M."/>
            <person name="Shimada Y."/>
            <person name="Taylor H.L."/>
            <person name="Tomo T."/>
            <person name="Tsuchiya T."/>
            <person name="Wang Z.T."/>
            <person name="Raymond J."/>
            <person name="Mimuro M."/>
            <person name="Blankenship R.E."/>
            <person name="Touchman J.W."/>
        </authorList>
    </citation>
    <scope>NUCLEOTIDE SEQUENCE [LARGE SCALE GENOMIC DNA]</scope>
    <source>
        <strain>MBIC 11017</strain>
    </source>
</reference>
<keyword id="KW-0030">Aminoacyl-tRNA synthetase</keyword>
<keyword id="KW-0067">ATP-binding</keyword>
<keyword id="KW-0963">Cytoplasm</keyword>
<keyword id="KW-0436">Ligase</keyword>
<keyword id="KW-0479">Metal-binding</keyword>
<keyword id="KW-0547">Nucleotide-binding</keyword>
<keyword id="KW-0648">Protein biosynthesis</keyword>
<keyword id="KW-1185">Reference proteome</keyword>
<keyword id="KW-0694">RNA-binding</keyword>
<keyword id="KW-0820">tRNA-binding</keyword>
<keyword id="KW-0862">Zinc</keyword>
<evidence type="ECO:0000255" key="1">
    <source>
        <dbReference type="HAMAP-Rule" id="MF_00036"/>
    </source>
</evidence>
<proteinExistence type="inferred from homology"/>
<comment type="function">
    <text evidence="1">Catalyzes the attachment of alanine to tRNA(Ala) in a two-step reaction: alanine is first activated by ATP to form Ala-AMP and then transferred to the acceptor end of tRNA(Ala). Also edits incorrectly charged Ser-tRNA(Ala) and Gly-tRNA(Ala) via its editing domain.</text>
</comment>
<comment type="catalytic activity">
    <reaction evidence="1">
        <text>tRNA(Ala) + L-alanine + ATP = L-alanyl-tRNA(Ala) + AMP + diphosphate</text>
        <dbReference type="Rhea" id="RHEA:12540"/>
        <dbReference type="Rhea" id="RHEA-COMP:9657"/>
        <dbReference type="Rhea" id="RHEA-COMP:9923"/>
        <dbReference type="ChEBI" id="CHEBI:30616"/>
        <dbReference type="ChEBI" id="CHEBI:33019"/>
        <dbReference type="ChEBI" id="CHEBI:57972"/>
        <dbReference type="ChEBI" id="CHEBI:78442"/>
        <dbReference type="ChEBI" id="CHEBI:78497"/>
        <dbReference type="ChEBI" id="CHEBI:456215"/>
        <dbReference type="EC" id="6.1.1.7"/>
    </reaction>
</comment>
<comment type="cofactor">
    <cofactor evidence="1">
        <name>Zn(2+)</name>
        <dbReference type="ChEBI" id="CHEBI:29105"/>
    </cofactor>
    <text evidence="1">Binds 1 zinc ion per subunit.</text>
</comment>
<comment type="subcellular location">
    <subcellularLocation>
        <location evidence="1">Cytoplasm</location>
    </subcellularLocation>
</comment>
<comment type="domain">
    <text evidence="1">Consists of three domains; the N-terminal catalytic domain, the editing domain and the C-terminal C-Ala domain. The editing domain removes incorrectly charged amino acids, while the C-Ala domain, along with tRNA(Ala), serves as a bridge to cooperatively bring together the editing and aminoacylation centers thus stimulating deacylation of misacylated tRNAs.</text>
</comment>
<comment type="similarity">
    <text evidence="1">Belongs to the class-II aminoacyl-tRNA synthetase family.</text>
</comment>
<organism>
    <name type="scientific">Acaryochloris marina (strain MBIC 11017)</name>
    <dbReference type="NCBI Taxonomy" id="329726"/>
    <lineage>
        <taxon>Bacteria</taxon>
        <taxon>Bacillati</taxon>
        <taxon>Cyanobacteriota</taxon>
        <taxon>Cyanophyceae</taxon>
        <taxon>Acaryochloridales</taxon>
        <taxon>Acaryochloridaceae</taxon>
        <taxon>Acaryochloris</taxon>
    </lineage>
</organism>
<feature type="chain" id="PRO_0000347466" description="Alanine--tRNA ligase">
    <location>
        <begin position="1"/>
        <end position="873"/>
    </location>
</feature>
<feature type="binding site" evidence="1">
    <location>
        <position position="559"/>
    </location>
    <ligand>
        <name>Zn(2+)</name>
        <dbReference type="ChEBI" id="CHEBI:29105"/>
    </ligand>
</feature>
<feature type="binding site" evidence="1">
    <location>
        <position position="563"/>
    </location>
    <ligand>
        <name>Zn(2+)</name>
        <dbReference type="ChEBI" id="CHEBI:29105"/>
    </ligand>
</feature>
<feature type="binding site" evidence="1">
    <location>
        <position position="661"/>
    </location>
    <ligand>
        <name>Zn(2+)</name>
        <dbReference type="ChEBI" id="CHEBI:29105"/>
    </ligand>
</feature>
<feature type="binding site" evidence="1">
    <location>
        <position position="665"/>
    </location>
    <ligand>
        <name>Zn(2+)</name>
        <dbReference type="ChEBI" id="CHEBI:29105"/>
    </ligand>
</feature>